<protein>
    <recommendedName>
        <fullName>Potassium/sodium hyperpolarization-activated cyclic nucleotide-gated channel 3</fullName>
    </recommendedName>
</protein>
<feature type="chain" id="PRO_0000054116" description="Potassium/sodium hyperpolarization-activated cyclic nucleotide-gated channel 3">
    <location>
        <begin position="1"/>
        <end position="780"/>
    </location>
</feature>
<feature type="topological domain" description="Cytoplasmic" evidence="2">
    <location>
        <begin position="1"/>
        <end position="96"/>
    </location>
</feature>
<feature type="transmembrane region" description="Helical; Name=Segment S1" evidence="2">
    <location>
        <begin position="97"/>
        <end position="117"/>
    </location>
</feature>
<feature type="topological domain" description="Extracellular" evidence="2">
    <location>
        <begin position="118"/>
        <end position="123"/>
    </location>
</feature>
<feature type="transmembrane region" description="Helical; Name=Segment S2" evidence="2">
    <location>
        <begin position="124"/>
        <end position="144"/>
    </location>
</feature>
<feature type="topological domain" description="Cytoplasmic" evidence="2">
    <location>
        <begin position="145"/>
        <end position="170"/>
    </location>
</feature>
<feature type="transmembrane region" description="Helical; Name=Segment S3" evidence="2">
    <location>
        <begin position="171"/>
        <end position="191"/>
    </location>
</feature>
<feature type="topological domain" description="Extracellular" evidence="2">
    <location>
        <begin position="192"/>
        <end position="200"/>
    </location>
</feature>
<feature type="transmembrane region" description="Helical; Voltage-sensor; Name=Segment S4" evidence="2">
    <location>
        <begin position="201"/>
        <end position="221"/>
    </location>
</feature>
<feature type="topological domain" description="Cytoplasmic" evidence="2">
    <location>
        <begin position="222"/>
        <end position="252"/>
    </location>
</feature>
<feature type="transmembrane region" description="Helical; Name=Segment S5" evidence="2">
    <location>
        <begin position="253"/>
        <end position="273"/>
    </location>
</feature>
<feature type="topological domain" description="Extracellular" evidence="2">
    <location>
        <begin position="274"/>
        <end position="296"/>
    </location>
</feature>
<feature type="intramembrane region" description="Pore-forming; Name=Segment H5" evidence="2">
    <location>
        <begin position="297"/>
        <end position="318"/>
    </location>
</feature>
<feature type="topological domain" description="Extracellular" evidence="2">
    <location>
        <begin position="319"/>
        <end position="328"/>
    </location>
</feature>
<feature type="transmembrane region" description="Helical; Name=Segment S6" evidence="2">
    <location>
        <begin position="329"/>
        <end position="349"/>
    </location>
</feature>
<feature type="topological domain" description="Cytoplasmic" evidence="2">
    <location>
        <begin position="350"/>
        <end position="780"/>
    </location>
</feature>
<feature type="region of interest" description="Disordered" evidence="8">
    <location>
        <begin position="1"/>
        <end position="47"/>
    </location>
</feature>
<feature type="region of interest" description="Involved in subunit assembly" evidence="1">
    <location>
        <begin position="45"/>
        <end position="90"/>
    </location>
</feature>
<feature type="region of interest" description="Interaction with KCTD3" evidence="4">
    <location>
        <begin position="353"/>
        <end position="780"/>
    </location>
</feature>
<feature type="region of interest" description="Disordered" evidence="8">
    <location>
        <begin position="549"/>
        <end position="569"/>
    </location>
</feature>
<feature type="region of interest" description="Disordered" evidence="8">
    <location>
        <begin position="687"/>
        <end position="780"/>
    </location>
</feature>
<feature type="compositionally biased region" description="Low complexity" evidence="8">
    <location>
        <begin position="13"/>
        <end position="32"/>
    </location>
</feature>
<feature type="compositionally biased region" description="Polar residues" evidence="8">
    <location>
        <begin position="687"/>
        <end position="698"/>
    </location>
</feature>
<feature type="binding site" evidence="2">
    <location>
        <position position="491"/>
    </location>
    <ligand>
        <name>3',5'-cyclic AMP</name>
        <dbReference type="ChEBI" id="CHEBI:58165"/>
    </ligand>
</feature>
<feature type="binding site" evidence="2">
    <location>
        <position position="492"/>
    </location>
    <ligand>
        <name>3',5'-cyclic AMP</name>
        <dbReference type="ChEBI" id="CHEBI:58165"/>
    </ligand>
</feature>
<feature type="binding site" evidence="2">
    <location>
        <position position="494"/>
    </location>
    <ligand>
        <name>3',5'-cyclic AMP</name>
        <dbReference type="ChEBI" id="CHEBI:58165"/>
    </ligand>
</feature>
<feature type="binding site" evidence="2">
    <location>
        <position position="501"/>
    </location>
    <ligand>
        <name>3',5'-cyclic AMP</name>
        <dbReference type="ChEBI" id="CHEBI:58165"/>
    </ligand>
</feature>
<feature type="binding site" evidence="2">
    <location>
        <position position="502"/>
    </location>
    <ligand>
        <name>3',5'-cyclic AMP</name>
        <dbReference type="ChEBI" id="CHEBI:58165"/>
    </ligand>
</feature>
<feature type="binding site" evidence="3">
    <location>
        <position position="542"/>
    </location>
    <ligand>
        <name>3',5'-cyclic AMP</name>
        <dbReference type="ChEBI" id="CHEBI:58165"/>
    </ligand>
</feature>
<feature type="binding site" evidence="2">
    <location>
        <position position="545"/>
    </location>
    <ligand>
        <name>3',5'-cyclic AMP</name>
        <dbReference type="ChEBI" id="CHEBI:58165"/>
    </ligand>
</feature>
<feature type="modified residue" description="Phosphoserine" evidence="10">
    <location>
        <position position="634"/>
    </location>
</feature>
<feature type="glycosylation site" description="N-linked (GlcNAc...) asparagine" evidence="7">
    <location>
        <position position="290"/>
    </location>
</feature>
<sequence>MEEEARPAVGDGEAATPARETPPAAPAQARAASGGVPESAPEPKRRQLGTLLQPTVNKFSLRVFGSHKAVEIEQERVKSAGAWIIHPYSDFRFYWDLIMLLLMVGNLIVLPVGITFFKEENSPPWIVFNVLSDTFFLLDLVLNFRTGIVVEEGAEILLAPRAIRTRYLRTWFLVDLISSIPVDYIFLVVELEPRLDAEVYKTARALRIVRFTKILSLLRLLRLSRLIRYMHQWEEIFHMTYDLASAVVRIFNLIGMMLLLCHWDGCLQFLVPMLQDFPSDCWVSMNRMVNHSWGRQYSHALFKAMSHMLCIGYGQQAPVGMPDVWLTMLSMIVGATCYAMFIGHATALIQSLDSSRRQYQEKYKQVEQYMSFHKLPADTRQRIHEYYEHRYQGKMFDEESILGELSEPLREEIINFTCRGLVAHMPLFAHADPSFVTAVLTKLRFEVFQPGDLVVREGSVGRKMYFIQHGLLSVLARGARDTRLTDGSYFGEICLLTRGRRTASVRADTYCRLYSLSVDHFNAVLEEFPMMRRAFETVAMDRLRRIGKKNSILQRKRSEPSPGSSSGGVMEQHLVQHDRDMARGIRGLAPGTGARLSGKPVLWEPLVHAPLQAAAVTSNVAIALTHQRGPLPLSPDSPATLLARSARRSAGSPASPLVPVRAGPLLARGPWASTSRLPAPPARTLHASLSRTGRSQVSLLGPPPGGGGRRLGPRGRPLSASQPSLPQRATGDGSPRRKGSGSERLPPSGLLAKPPGTVQPSRSSVPEPVTPRGPQISANM</sequence>
<comment type="function">
    <text evidence="4">Hyperpolarization-activated ion channel that are permeable to sodium and potassium ions, with an about 3:1 preference for potassium ions. Contributes to the native pacemaker currents in heart (If) and in neurons (Ih). In particular, plays a pivotal role in maintaining excitability and promoting rhythmic burst firing within hypothalamic nuclei. Exerts a significant influence on the configuration of the cardiac action potential waveform. Does not appear to play a prominent role in the processing of acute, neuropathic, or inflammatory pain.</text>
</comment>
<comment type="catalytic activity">
    <reaction evidence="5">
        <text>K(+)(in) = K(+)(out)</text>
        <dbReference type="Rhea" id="RHEA:29463"/>
        <dbReference type="ChEBI" id="CHEBI:29103"/>
    </reaction>
</comment>
<comment type="catalytic activity">
    <reaction evidence="5">
        <text>Na(+)(in) = Na(+)(out)</text>
        <dbReference type="Rhea" id="RHEA:34963"/>
        <dbReference type="ChEBI" id="CHEBI:29101"/>
    </reaction>
</comment>
<comment type="activity regulation">
    <text evidence="4">Inhibited by Cs(1+) and ivabradine. Unlike HCN2 and HCN4, HCN3 is insensitive to cyclic nucleotides, such as cAMP or cGMP. This lack of sensitivity of HCN3, despite harboring a functional cyclic nucleotide-binding domain (CNBD), may be explained by its shorter C-terminal sequence, which may alter the normal autoinhibition of the channel. Phosphatidylinositol-4,5-bisphosphate (PIP(2)) shifts HCN3 activation to more depolarized potentials and accelerated activation kinetics.</text>
</comment>
<comment type="subunit">
    <text evidence="4 6">Homotetramer. The potassium channel is composed of a homo- or heterotetrameric complex of pore-forming subunits (By similarity). Interacts with HCN1 (By similarity). Interacts with KCTD3; this interaction increases cell surface expression and current density of this channel. Interacts with PEX5L (By similarity).</text>
</comment>
<comment type="subcellular location">
    <subcellularLocation>
        <location evidence="4">Cell membrane</location>
        <topology evidence="7">Multi-pass membrane protein</topology>
    </subcellularLocation>
</comment>
<comment type="domain">
    <text evidence="2">The segment S4 is the voltage-sensor and is characterized by a series of positively charged amino acids at every third position. The ion-conducting pore region is between segment S5 and S6.</text>
</comment>
<comment type="similarity">
    <text evidence="9">Belongs to the potassium channel HCN family.</text>
</comment>
<proteinExistence type="evidence at protein level"/>
<evidence type="ECO:0000250" key="1"/>
<evidence type="ECO:0000250" key="2">
    <source>
        <dbReference type="UniProtKB" id="O60741"/>
    </source>
</evidence>
<evidence type="ECO:0000250" key="3">
    <source>
        <dbReference type="UniProtKB" id="O88704"/>
    </source>
</evidence>
<evidence type="ECO:0000250" key="4">
    <source>
        <dbReference type="UniProtKB" id="O88705"/>
    </source>
</evidence>
<evidence type="ECO:0000250" key="5">
    <source>
        <dbReference type="UniProtKB" id="Q9P1Z3"/>
    </source>
</evidence>
<evidence type="ECO:0000250" key="6">
    <source>
        <dbReference type="UniProtKB" id="Q9UL51"/>
    </source>
</evidence>
<evidence type="ECO:0000255" key="7"/>
<evidence type="ECO:0000256" key="8">
    <source>
        <dbReference type="SAM" id="MobiDB-lite"/>
    </source>
</evidence>
<evidence type="ECO:0000305" key="9"/>
<evidence type="ECO:0007744" key="10">
    <source>
    </source>
</evidence>
<reference key="1">
    <citation type="journal article" date="2000" name="Brain Res. Mol. Brain Res.">
        <title>Cloning and localization of the hyperpolarization-activated cyclic nucleotide-gated channel family in rat brain.</title>
        <authorList>
            <person name="Monteggia L.M."/>
            <person name="Eisch A.J."/>
            <person name="Tang M.D."/>
            <person name="Kaczmarek L.K."/>
            <person name="Nestler E.J."/>
        </authorList>
    </citation>
    <scope>NUCLEOTIDE SEQUENCE [MRNA]</scope>
    <scope>TISSUE SPECIFICITY</scope>
    <source>
        <strain>Sprague-Dawley</strain>
        <tissue>Brain</tissue>
    </source>
</reference>
<reference key="2">
    <citation type="journal article" date="2012" name="Nat. Commun.">
        <title>Quantitative maps of protein phosphorylation sites across 14 different rat organs and tissues.</title>
        <authorList>
            <person name="Lundby A."/>
            <person name="Secher A."/>
            <person name="Lage K."/>
            <person name="Nordsborg N.B."/>
            <person name="Dmytriyev A."/>
            <person name="Lundby C."/>
            <person name="Olsen J.V."/>
        </authorList>
    </citation>
    <scope>PHOSPHORYLATION [LARGE SCALE ANALYSIS] AT SER-634</scope>
    <scope>IDENTIFICATION BY MASS SPECTROMETRY [LARGE SCALE ANALYSIS]</scope>
</reference>
<keyword id="KW-0114">cAMP</keyword>
<keyword id="KW-0116">cAMP-binding</keyword>
<keyword id="KW-1003">Cell membrane</keyword>
<keyword id="KW-0325">Glycoprotein</keyword>
<keyword id="KW-0407">Ion channel</keyword>
<keyword id="KW-0406">Ion transport</keyword>
<keyword id="KW-1071">Ligand-gated ion channel</keyword>
<keyword id="KW-0472">Membrane</keyword>
<keyword id="KW-0547">Nucleotide-binding</keyword>
<keyword id="KW-0597">Phosphoprotein</keyword>
<keyword id="KW-0630">Potassium</keyword>
<keyword id="KW-0631">Potassium channel</keyword>
<keyword id="KW-0633">Potassium transport</keyword>
<keyword id="KW-1185">Reference proteome</keyword>
<keyword id="KW-0915">Sodium</keyword>
<keyword id="KW-0894">Sodium channel</keyword>
<keyword id="KW-0739">Sodium transport</keyword>
<keyword id="KW-0812">Transmembrane</keyword>
<keyword id="KW-1133">Transmembrane helix</keyword>
<keyword id="KW-0813">Transport</keyword>
<keyword id="KW-0851">Voltage-gated channel</keyword>
<organism>
    <name type="scientific">Rattus norvegicus</name>
    <name type="common">Rat</name>
    <dbReference type="NCBI Taxonomy" id="10116"/>
    <lineage>
        <taxon>Eukaryota</taxon>
        <taxon>Metazoa</taxon>
        <taxon>Chordata</taxon>
        <taxon>Craniata</taxon>
        <taxon>Vertebrata</taxon>
        <taxon>Euteleostomi</taxon>
        <taxon>Mammalia</taxon>
        <taxon>Eutheria</taxon>
        <taxon>Euarchontoglires</taxon>
        <taxon>Glires</taxon>
        <taxon>Rodentia</taxon>
        <taxon>Myomorpha</taxon>
        <taxon>Muroidea</taxon>
        <taxon>Muridae</taxon>
        <taxon>Murinae</taxon>
        <taxon>Rattus</taxon>
    </lineage>
</organism>
<accession>Q9JKA8</accession>
<dbReference type="EMBL" id="AF247452">
    <property type="protein sequence ID" value="AAF62175.1"/>
    <property type="molecule type" value="mRNA"/>
</dbReference>
<dbReference type="RefSeq" id="NP_446137.1">
    <property type="nucleotide sequence ID" value="NM_053685.2"/>
</dbReference>
<dbReference type="SMR" id="Q9JKA8"/>
<dbReference type="FunCoup" id="Q9JKA8">
    <property type="interactions" value="117"/>
</dbReference>
<dbReference type="STRING" id="10116.ENSRNOP00000027785"/>
<dbReference type="GlyCosmos" id="Q9JKA8">
    <property type="glycosylation" value="1 site, No reported glycans"/>
</dbReference>
<dbReference type="GlyGen" id="Q9JKA8">
    <property type="glycosylation" value="2 sites"/>
</dbReference>
<dbReference type="iPTMnet" id="Q9JKA8"/>
<dbReference type="PhosphoSitePlus" id="Q9JKA8"/>
<dbReference type="PaxDb" id="10116-ENSRNOP00000027785"/>
<dbReference type="ABCD" id="Q9JKA8">
    <property type="antibodies" value="1 sequenced antibody"/>
</dbReference>
<dbReference type="Ensembl" id="ENSRNOT00000027785.4">
    <property type="protein sequence ID" value="ENSRNOP00000027785.1"/>
    <property type="gene ID" value="ENSRNOG00000020444.4"/>
</dbReference>
<dbReference type="GeneID" id="114245"/>
<dbReference type="KEGG" id="rno:114245"/>
<dbReference type="UCSC" id="RGD:620691">
    <property type="organism name" value="rat"/>
</dbReference>
<dbReference type="AGR" id="RGD:620691"/>
<dbReference type="CTD" id="57657"/>
<dbReference type="RGD" id="620691">
    <property type="gene designation" value="Hcn3"/>
</dbReference>
<dbReference type="eggNOG" id="KOG0498">
    <property type="taxonomic scope" value="Eukaryota"/>
</dbReference>
<dbReference type="GeneTree" id="ENSGT00940000162023"/>
<dbReference type="HOGENOM" id="CLU_005746_15_1_1"/>
<dbReference type="InParanoid" id="Q9JKA8"/>
<dbReference type="OMA" id="HMANHSW"/>
<dbReference type="OrthoDB" id="421226at2759"/>
<dbReference type="PhylomeDB" id="Q9JKA8"/>
<dbReference type="TreeFam" id="TF318250"/>
<dbReference type="Reactome" id="R-RNO-1296061">
    <property type="pathway name" value="HCN channels"/>
</dbReference>
<dbReference type="PRO" id="PR:Q9JKA8"/>
<dbReference type="Proteomes" id="UP000002494">
    <property type="component" value="Chromosome 2"/>
</dbReference>
<dbReference type="Bgee" id="ENSRNOG00000020444">
    <property type="expression patterns" value="Expressed in liver and 11 other cell types or tissues"/>
</dbReference>
<dbReference type="GO" id="GO:0030424">
    <property type="term" value="C:axon"/>
    <property type="evidence" value="ECO:0000314"/>
    <property type="project" value="RGD"/>
</dbReference>
<dbReference type="GO" id="GO:0044316">
    <property type="term" value="C:cone cell pedicle"/>
    <property type="evidence" value="ECO:0000314"/>
    <property type="project" value="RGD"/>
</dbReference>
<dbReference type="GO" id="GO:0030425">
    <property type="term" value="C:dendrite"/>
    <property type="evidence" value="ECO:0000314"/>
    <property type="project" value="RGD"/>
</dbReference>
<dbReference type="GO" id="GO:0098855">
    <property type="term" value="C:HCN channel complex"/>
    <property type="evidence" value="ECO:0000266"/>
    <property type="project" value="RGD"/>
</dbReference>
<dbReference type="GO" id="GO:0016020">
    <property type="term" value="C:membrane"/>
    <property type="evidence" value="ECO:0000266"/>
    <property type="project" value="RGD"/>
</dbReference>
<dbReference type="GO" id="GO:0043025">
    <property type="term" value="C:neuronal cell body"/>
    <property type="evidence" value="ECO:0000314"/>
    <property type="project" value="RGD"/>
</dbReference>
<dbReference type="GO" id="GO:0005886">
    <property type="term" value="C:plasma membrane"/>
    <property type="evidence" value="ECO:0000266"/>
    <property type="project" value="RGD"/>
</dbReference>
<dbReference type="GO" id="GO:0030552">
    <property type="term" value="F:cAMP binding"/>
    <property type="evidence" value="ECO:0007669"/>
    <property type="project" value="UniProtKB-KW"/>
</dbReference>
<dbReference type="GO" id="GO:0005249">
    <property type="term" value="F:voltage-gated potassium channel activity"/>
    <property type="evidence" value="ECO:0000266"/>
    <property type="project" value="RGD"/>
</dbReference>
<dbReference type="GO" id="GO:0005248">
    <property type="term" value="F:voltage-gated sodium channel activity"/>
    <property type="evidence" value="ECO:0000266"/>
    <property type="project" value="RGD"/>
</dbReference>
<dbReference type="GO" id="GO:0071320">
    <property type="term" value="P:cellular response to cAMP"/>
    <property type="evidence" value="ECO:0000266"/>
    <property type="project" value="RGD"/>
</dbReference>
<dbReference type="GO" id="GO:1903351">
    <property type="term" value="P:cellular response to dopamine"/>
    <property type="evidence" value="ECO:0000270"/>
    <property type="project" value="RGD"/>
</dbReference>
<dbReference type="GO" id="GO:0071805">
    <property type="term" value="P:potassium ion transmembrane transport"/>
    <property type="evidence" value="ECO:0000266"/>
    <property type="project" value="RGD"/>
</dbReference>
<dbReference type="GO" id="GO:0003254">
    <property type="term" value="P:regulation of membrane depolarization"/>
    <property type="evidence" value="ECO:0000266"/>
    <property type="project" value="RGD"/>
</dbReference>
<dbReference type="GO" id="GO:0042391">
    <property type="term" value="P:regulation of membrane potential"/>
    <property type="evidence" value="ECO:0000266"/>
    <property type="project" value="RGD"/>
</dbReference>
<dbReference type="GO" id="GO:0035725">
    <property type="term" value="P:sodium ion transmembrane transport"/>
    <property type="evidence" value="ECO:0000266"/>
    <property type="project" value="RGD"/>
</dbReference>
<dbReference type="CDD" id="cd00038">
    <property type="entry name" value="CAP_ED"/>
    <property type="match status" value="1"/>
</dbReference>
<dbReference type="FunFam" id="1.10.287.70:FF:000031">
    <property type="entry name" value="Potassium/sodium hyperpolarization-activated cyclic nucleotide-gated channel 1, putative"/>
    <property type="match status" value="1"/>
</dbReference>
<dbReference type="FunFam" id="1.10.287.630:FF:000002">
    <property type="entry name" value="Potassium/sodium hyperpolarization-activated cyclic nucleotide-gated channel 4"/>
    <property type="match status" value="1"/>
</dbReference>
<dbReference type="FunFam" id="2.60.120.10:FF:000007">
    <property type="entry name" value="Putative potassium/sodium hyperpolarization-activated cyclic nucleotide-gated channel 2"/>
    <property type="match status" value="1"/>
</dbReference>
<dbReference type="Gene3D" id="1.10.287.70">
    <property type="match status" value="1"/>
</dbReference>
<dbReference type="Gene3D" id="1.10.287.630">
    <property type="entry name" value="Helix hairpin bin"/>
    <property type="match status" value="1"/>
</dbReference>
<dbReference type="Gene3D" id="2.60.120.10">
    <property type="entry name" value="Jelly Rolls"/>
    <property type="match status" value="1"/>
</dbReference>
<dbReference type="InterPro" id="IPR000595">
    <property type="entry name" value="cNMP-bd_dom"/>
</dbReference>
<dbReference type="InterPro" id="IPR018490">
    <property type="entry name" value="cNMP-bd_dom_sf"/>
</dbReference>
<dbReference type="InterPro" id="IPR005821">
    <property type="entry name" value="Ion_trans_dom"/>
</dbReference>
<dbReference type="InterPro" id="IPR013621">
    <property type="entry name" value="Ion_trans_N"/>
</dbReference>
<dbReference type="InterPro" id="IPR051413">
    <property type="entry name" value="K/Na_HCN_channel"/>
</dbReference>
<dbReference type="InterPro" id="IPR003938">
    <property type="entry name" value="K_chnl_volt-dep_EAG/ELK/ERG"/>
</dbReference>
<dbReference type="InterPro" id="IPR014710">
    <property type="entry name" value="RmlC-like_jellyroll"/>
</dbReference>
<dbReference type="PANTHER" id="PTHR45689">
    <property type="entry name" value="I[[H]] CHANNEL, ISOFORM E"/>
    <property type="match status" value="1"/>
</dbReference>
<dbReference type="PANTHER" id="PTHR45689:SF7">
    <property type="entry name" value="POTASSIUM_SODIUM HYPERPOLARIZATION-ACTIVATED CYCLIC NUCLEOTIDE-GATED CHANNEL 3"/>
    <property type="match status" value="1"/>
</dbReference>
<dbReference type="Pfam" id="PF00027">
    <property type="entry name" value="cNMP_binding"/>
    <property type="match status" value="1"/>
</dbReference>
<dbReference type="Pfam" id="PF00520">
    <property type="entry name" value="Ion_trans"/>
    <property type="match status" value="1"/>
</dbReference>
<dbReference type="Pfam" id="PF08412">
    <property type="entry name" value="Ion_trans_N"/>
    <property type="match status" value="1"/>
</dbReference>
<dbReference type="PRINTS" id="PR01463">
    <property type="entry name" value="EAGCHANLFMLY"/>
</dbReference>
<dbReference type="SMART" id="SM00100">
    <property type="entry name" value="cNMP"/>
    <property type="match status" value="1"/>
</dbReference>
<dbReference type="SUPFAM" id="SSF51206">
    <property type="entry name" value="cAMP-binding domain-like"/>
    <property type="match status" value="1"/>
</dbReference>
<dbReference type="SUPFAM" id="SSF81324">
    <property type="entry name" value="Voltage-gated potassium channels"/>
    <property type="match status" value="1"/>
</dbReference>
<dbReference type="PROSITE" id="PS50042">
    <property type="entry name" value="CNMP_BINDING_3"/>
    <property type="match status" value="1"/>
</dbReference>
<name>HCN3_RAT</name>
<gene>
    <name type="primary">Hcn3</name>
</gene>